<protein>
    <recommendedName>
        <fullName evidence="1">Methylenetetrahydrofolate--tRNA-(uracil-5-)-methyltransferase TrmFO</fullName>
        <ecNumber evidence="1">2.1.1.74</ecNumber>
    </recommendedName>
    <alternativeName>
        <fullName evidence="1">Folate-dependent tRNA (uracil-5-)-methyltransferase</fullName>
    </alternativeName>
    <alternativeName>
        <fullName evidence="1">Folate-dependent tRNA(M-5-U54)-methyltransferase</fullName>
    </alternativeName>
</protein>
<reference key="1">
    <citation type="journal article" date="2005" name="Proc. Natl. Acad. Sci. U.S.A.">
        <title>Genome analysis of multiple pathogenic isolates of Streptococcus agalactiae: implications for the microbial 'pan-genome'.</title>
        <authorList>
            <person name="Tettelin H."/>
            <person name="Masignani V."/>
            <person name="Cieslewicz M.J."/>
            <person name="Donati C."/>
            <person name="Medini D."/>
            <person name="Ward N.L."/>
            <person name="Angiuoli S.V."/>
            <person name="Crabtree J."/>
            <person name="Jones A.L."/>
            <person name="Durkin A.S."/>
            <person name="DeBoy R.T."/>
            <person name="Davidsen T.M."/>
            <person name="Mora M."/>
            <person name="Scarselli M."/>
            <person name="Margarit y Ros I."/>
            <person name="Peterson J.D."/>
            <person name="Hauser C.R."/>
            <person name="Sundaram J.P."/>
            <person name="Nelson W.C."/>
            <person name="Madupu R."/>
            <person name="Brinkac L.M."/>
            <person name="Dodson R.J."/>
            <person name="Rosovitz M.J."/>
            <person name="Sullivan S.A."/>
            <person name="Daugherty S.C."/>
            <person name="Haft D.H."/>
            <person name="Selengut J."/>
            <person name="Gwinn M.L."/>
            <person name="Zhou L."/>
            <person name="Zafar N."/>
            <person name="Khouri H."/>
            <person name="Radune D."/>
            <person name="Dimitrov G."/>
            <person name="Watkins K."/>
            <person name="O'Connor K.J."/>
            <person name="Smith S."/>
            <person name="Utterback T.R."/>
            <person name="White O."/>
            <person name="Rubens C.E."/>
            <person name="Grandi G."/>
            <person name="Madoff L.C."/>
            <person name="Kasper D.L."/>
            <person name="Telford J.L."/>
            <person name="Wessels M.R."/>
            <person name="Rappuoli R."/>
            <person name="Fraser C.M."/>
        </authorList>
    </citation>
    <scope>NUCLEOTIDE SEQUENCE [LARGE SCALE GENOMIC DNA]</scope>
    <source>
        <strain>ATCC 27591 / A909 / CDC SS700</strain>
    </source>
</reference>
<sequence>MSQSYINVIGAGLAGSEAAYQIAKRGIPVKLYEMRGVKSTPQHKTDNFAELVCSNSFRGDSLTNAVGLLKEEMRRLDSIIMRNGEAHRVPAGGAMAVDREGYSEAVTEEIHKHPLIEVIRDEITDIPGDAITVIATGPLTSDSLAAKIHELNGGDGFYFYDAAAPIVDKNTIDINKVYLKSRYDKGEAAYLNCPMTKEEFMAFHEALTTAEEAPLNSFEKEKYFEGCMPIEVMAKRGIKTMLYGPMKPVGLEYPEDYKGPRDGEFKTPYAVVQLRQDNAAGSLYNIVGFQTHLKWGEQKRVFQMIPGLENAEFVRYGVMHRNSYMDSPNLLNQTFATRKNPNLFFAGQMTGVEGYVESAASGLVAGINAVRRFNGESEVVFPQTTAIGALPHYITHTDSKHFQPMNVNFGIIKELEGPRIRDKKERYEAIATRALKDLEKFLNY</sequence>
<evidence type="ECO:0000255" key="1">
    <source>
        <dbReference type="HAMAP-Rule" id="MF_01037"/>
    </source>
</evidence>
<proteinExistence type="inferred from homology"/>
<keyword id="KW-0963">Cytoplasm</keyword>
<keyword id="KW-0274">FAD</keyword>
<keyword id="KW-0285">Flavoprotein</keyword>
<keyword id="KW-0489">Methyltransferase</keyword>
<keyword id="KW-0520">NAD</keyword>
<keyword id="KW-0521">NADP</keyword>
<keyword id="KW-0808">Transferase</keyword>
<keyword id="KW-0819">tRNA processing</keyword>
<comment type="function">
    <text evidence="1">Catalyzes the folate-dependent formation of 5-methyl-uridine at position 54 (M-5-U54) in all tRNAs.</text>
</comment>
<comment type="catalytic activity">
    <reaction evidence="1">
        <text>uridine(54) in tRNA + (6R)-5,10-methylene-5,6,7,8-tetrahydrofolate + NADH + H(+) = 5-methyluridine(54) in tRNA + (6S)-5,6,7,8-tetrahydrofolate + NAD(+)</text>
        <dbReference type="Rhea" id="RHEA:16873"/>
        <dbReference type="Rhea" id="RHEA-COMP:10167"/>
        <dbReference type="Rhea" id="RHEA-COMP:10193"/>
        <dbReference type="ChEBI" id="CHEBI:15378"/>
        <dbReference type="ChEBI" id="CHEBI:15636"/>
        <dbReference type="ChEBI" id="CHEBI:57453"/>
        <dbReference type="ChEBI" id="CHEBI:57540"/>
        <dbReference type="ChEBI" id="CHEBI:57945"/>
        <dbReference type="ChEBI" id="CHEBI:65315"/>
        <dbReference type="ChEBI" id="CHEBI:74447"/>
        <dbReference type="EC" id="2.1.1.74"/>
    </reaction>
</comment>
<comment type="catalytic activity">
    <reaction evidence="1">
        <text>uridine(54) in tRNA + (6R)-5,10-methylene-5,6,7,8-tetrahydrofolate + NADPH + H(+) = 5-methyluridine(54) in tRNA + (6S)-5,6,7,8-tetrahydrofolate + NADP(+)</text>
        <dbReference type="Rhea" id="RHEA:62372"/>
        <dbReference type="Rhea" id="RHEA-COMP:10167"/>
        <dbReference type="Rhea" id="RHEA-COMP:10193"/>
        <dbReference type="ChEBI" id="CHEBI:15378"/>
        <dbReference type="ChEBI" id="CHEBI:15636"/>
        <dbReference type="ChEBI" id="CHEBI:57453"/>
        <dbReference type="ChEBI" id="CHEBI:57783"/>
        <dbReference type="ChEBI" id="CHEBI:58349"/>
        <dbReference type="ChEBI" id="CHEBI:65315"/>
        <dbReference type="ChEBI" id="CHEBI:74447"/>
        <dbReference type="EC" id="2.1.1.74"/>
    </reaction>
</comment>
<comment type="cofactor">
    <cofactor evidence="1">
        <name>FAD</name>
        <dbReference type="ChEBI" id="CHEBI:57692"/>
    </cofactor>
</comment>
<comment type="subcellular location">
    <subcellularLocation>
        <location evidence="1">Cytoplasm</location>
    </subcellularLocation>
</comment>
<comment type="similarity">
    <text evidence="1">Belongs to the MnmG family. TrmFO subfamily.</text>
</comment>
<name>TRMFO_STRA1</name>
<feature type="chain" id="PRO_1000063934" description="Methylenetetrahydrofolate--tRNA-(uracil-5-)-methyltransferase TrmFO">
    <location>
        <begin position="1"/>
        <end position="444"/>
    </location>
</feature>
<feature type="binding site" evidence="1">
    <location>
        <begin position="10"/>
        <end position="15"/>
    </location>
    <ligand>
        <name>FAD</name>
        <dbReference type="ChEBI" id="CHEBI:57692"/>
    </ligand>
</feature>
<dbReference type="EC" id="2.1.1.74" evidence="1"/>
<dbReference type="EMBL" id="CP000114">
    <property type="protein sequence ID" value="ABA45772.1"/>
    <property type="molecule type" value="Genomic_DNA"/>
</dbReference>
<dbReference type="RefSeq" id="WP_000083750.1">
    <property type="nucleotide sequence ID" value="NC_007432.1"/>
</dbReference>
<dbReference type="SMR" id="Q3K1B8"/>
<dbReference type="KEGG" id="sak:SAK_1064"/>
<dbReference type="HOGENOM" id="CLU_033057_1_0_9"/>
<dbReference type="GO" id="GO:0005829">
    <property type="term" value="C:cytosol"/>
    <property type="evidence" value="ECO:0007669"/>
    <property type="project" value="TreeGrafter"/>
</dbReference>
<dbReference type="GO" id="GO:0050660">
    <property type="term" value="F:flavin adenine dinucleotide binding"/>
    <property type="evidence" value="ECO:0007669"/>
    <property type="project" value="UniProtKB-UniRule"/>
</dbReference>
<dbReference type="GO" id="GO:0047151">
    <property type="term" value="F:tRNA (uracil(54)-C5)-methyltransferase activity, 5,10-methylenetetrahydrofolate-dependent"/>
    <property type="evidence" value="ECO:0007669"/>
    <property type="project" value="UniProtKB-UniRule"/>
</dbReference>
<dbReference type="GO" id="GO:0030488">
    <property type="term" value="P:tRNA methylation"/>
    <property type="evidence" value="ECO:0007669"/>
    <property type="project" value="TreeGrafter"/>
</dbReference>
<dbReference type="GO" id="GO:0002098">
    <property type="term" value="P:tRNA wobble uridine modification"/>
    <property type="evidence" value="ECO:0007669"/>
    <property type="project" value="TreeGrafter"/>
</dbReference>
<dbReference type="FunFam" id="3.50.50.60:FF:000035">
    <property type="entry name" value="Methylenetetrahydrofolate--tRNA-(uracil-5-)-methyltransferase TrmFO"/>
    <property type="match status" value="1"/>
</dbReference>
<dbReference type="FunFam" id="3.50.50.60:FF:000040">
    <property type="entry name" value="Methylenetetrahydrofolate--tRNA-(uracil-5-)-methyltransferase TrmFO"/>
    <property type="match status" value="1"/>
</dbReference>
<dbReference type="Gene3D" id="3.50.50.60">
    <property type="entry name" value="FAD/NAD(P)-binding domain"/>
    <property type="match status" value="2"/>
</dbReference>
<dbReference type="HAMAP" id="MF_01037">
    <property type="entry name" value="TrmFO"/>
    <property type="match status" value="1"/>
</dbReference>
<dbReference type="InterPro" id="IPR036188">
    <property type="entry name" value="FAD/NAD-bd_sf"/>
</dbReference>
<dbReference type="InterPro" id="IPR002218">
    <property type="entry name" value="MnmG-rel"/>
</dbReference>
<dbReference type="InterPro" id="IPR020595">
    <property type="entry name" value="MnmG-rel_CS"/>
</dbReference>
<dbReference type="InterPro" id="IPR040131">
    <property type="entry name" value="MnmG_N"/>
</dbReference>
<dbReference type="InterPro" id="IPR004417">
    <property type="entry name" value="TrmFO"/>
</dbReference>
<dbReference type="NCBIfam" id="TIGR00137">
    <property type="entry name" value="gid_trmFO"/>
    <property type="match status" value="1"/>
</dbReference>
<dbReference type="NCBIfam" id="NF003739">
    <property type="entry name" value="PRK05335.1"/>
    <property type="match status" value="1"/>
</dbReference>
<dbReference type="PANTHER" id="PTHR11806">
    <property type="entry name" value="GLUCOSE INHIBITED DIVISION PROTEIN A"/>
    <property type="match status" value="1"/>
</dbReference>
<dbReference type="PANTHER" id="PTHR11806:SF2">
    <property type="entry name" value="METHYLENETETRAHYDROFOLATE--TRNA-(URACIL-5-)-METHYLTRANSFERASE TRMFO"/>
    <property type="match status" value="1"/>
</dbReference>
<dbReference type="Pfam" id="PF01134">
    <property type="entry name" value="GIDA"/>
    <property type="match status" value="1"/>
</dbReference>
<dbReference type="SUPFAM" id="SSF51905">
    <property type="entry name" value="FAD/NAD(P)-binding domain"/>
    <property type="match status" value="1"/>
</dbReference>
<dbReference type="PROSITE" id="PS01281">
    <property type="entry name" value="GIDA_2"/>
    <property type="match status" value="1"/>
</dbReference>
<organism>
    <name type="scientific">Streptococcus agalactiae serotype Ia (strain ATCC 27591 / A909 / CDC SS700)</name>
    <dbReference type="NCBI Taxonomy" id="205921"/>
    <lineage>
        <taxon>Bacteria</taxon>
        <taxon>Bacillati</taxon>
        <taxon>Bacillota</taxon>
        <taxon>Bacilli</taxon>
        <taxon>Lactobacillales</taxon>
        <taxon>Streptococcaceae</taxon>
        <taxon>Streptococcus</taxon>
    </lineage>
</organism>
<accession>Q3K1B8</accession>
<gene>
    <name evidence="1" type="primary">trmFO</name>
    <name type="synonym">gid</name>
    <name type="ordered locus">SAK_1064</name>
</gene>